<dbReference type="EC" id="6.3.4.20" evidence="1"/>
<dbReference type="EMBL" id="CP000607">
    <property type="protein sequence ID" value="ABP36609.1"/>
    <property type="molecule type" value="Genomic_DNA"/>
</dbReference>
<dbReference type="SMR" id="A4SDQ0"/>
<dbReference type="STRING" id="290318.Cvib_0587"/>
<dbReference type="KEGG" id="pvi:Cvib_0587"/>
<dbReference type="eggNOG" id="COG0603">
    <property type="taxonomic scope" value="Bacteria"/>
</dbReference>
<dbReference type="HOGENOM" id="CLU_081854_1_0_10"/>
<dbReference type="OrthoDB" id="9789567at2"/>
<dbReference type="UniPathway" id="UPA00391"/>
<dbReference type="GO" id="GO:0005524">
    <property type="term" value="F:ATP binding"/>
    <property type="evidence" value="ECO:0007669"/>
    <property type="project" value="UniProtKB-UniRule"/>
</dbReference>
<dbReference type="GO" id="GO:0016879">
    <property type="term" value="F:ligase activity, forming carbon-nitrogen bonds"/>
    <property type="evidence" value="ECO:0007669"/>
    <property type="project" value="UniProtKB-UniRule"/>
</dbReference>
<dbReference type="GO" id="GO:0008270">
    <property type="term" value="F:zinc ion binding"/>
    <property type="evidence" value="ECO:0007669"/>
    <property type="project" value="UniProtKB-UniRule"/>
</dbReference>
<dbReference type="GO" id="GO:0008616">
    <property type="term" value="P:queuosine biosynthetic process"/>
    <property type="evidence" value="ECO:0007669"/>
    <property type="project" value="UniProtKB-UniRule"/>
</dbReference>
<dbReference type="CDD" id="cd01995">
    <property type="entry name" value="QueC-like"/>
    <property type="match status" value="1"/>
</dbReference>
<dbReference type="Gene3D" id="3.40.50.620">
    <property type="entry name" value="HUPs"/>
    <property type="match status" value="1"/>
</dbReference>
<dbReference type="HAMAP" id="MF_01633">
    <property type="entry name" value="QueC"/>
    <property type="match status" value="1"/>
</dbReference>
<dbReference type="InterPro" id="IPR018317">
    <property type="entry name" value="QueC"/>
</dbReference>
<dbReference type="InterPro" id="IPR014729">
    <property type="entry name" value="Rossmann-like_a/b/a_fold"/>
</dbReference>
<dbReference type="NCBIfam" id="TIGR00364">
    <property type="entry name" value="7-cyano-7-deazaguanine synthase QueC"/>
    <property type="match status" value="1"/>
</dbReference>
<dbReference type="PANTHER" id="PTHR42914">
    <property type="entry name" value="7-CYANO-7-DEAZAGUANINE SYNTHASE"/>
    <property type="match status" value="1"/>
</dbReference>
<dbReference type="PANTHER" id="PTHR42914:SF1">
    <property type="entry name" value="7-CYANO-7-DEAZAGUANINE SYNTHASE"/>
    <property type="match status" value="1"/>
</dbReference>
<dbReference type="Pfam" id="PF06508">
    <property type="entry name" value="QueC"/>
    <property type="match status" value="1"/>
</dbReference>
<dbReference type="PIRSF" id="PIRSF006293">
    <property type="entry name" value="ExsB"/>
    <property type="match status" value="1"/>
</dbReference>
<dbReference type="SUPFAM" id="SSF52402">
    <property type="entry name" value="Adenine nucleotide alpha hydrolases-like"/>
    <property type="match status" value="1"/>
</dbReference>
<organism>
    <name type="scientific">Chlorobium phaeovibrioides (strain DSM 265 / 1930)</name>
    <name type="common">Prosthecochloris vibrioformis (strain DSM 265)</name>
    <dbReference type="NCBI Taxonomy" id="290318"/>
    <lineage>
        <taxon>Bacteria</taxon>
        <taxon>Pseudomonadati</taxon>
        <taxon>Chlorobiota</taxon>
        <taxon>Chlorobiia</taxon>
        <taxon>Chlorobiales</taxon>
        <taxon>Chlorobiaceae</taxon>
        <taxon>Chlorobium/Pelodictyon group</taxon>
        <taxon>Chlorobium</taxon>
    </lineage>
</organism>
<comment type="function">
    <text evidence="1">Catalyzes the ATP-dependent conversion of 7-carboxy-7-deazaguanine (CDG) to 7-cyano-7-deazaguanine (preQ(0)).</text>
</comment>
<comment type="catalytic activity">
    <reaction evidence="1">
        <text>7-carboxy-7-deazaguanine + NH4(+) + ATP = 7-cyano-7-deazaguanine + ADP + phosphate + H2O + H(+)</text>
        <dbReference type="Rhea" id="RHEA:27982"/>
        <dbReference type="ChEBI" id="CHEBI:15377"/>
        <dbReference type="ChEBI" id="CHEBI:15378"/>
        <dbReference type="ChEBI" id="CHEBI:28938"/>
        <dbReference type="ChEBI" id="CHEBI:30616"/>
        <dbReference type="ChEBI" id="CHEBI:43474"/>
        <dbReference type="ChEBI" id="CHEBI:45075"/>
        <dbReference type="ChEBI" id="CHEBI:61036"/>
        <dbReference type="ChEBI" id="CHEBI:456216"/>
        <dbReference type="EC" id="6.3.4.20"/>
    </reaction>
</comment>
<comment type="cofactor">
    <cofactor evidence="1">
        <name>Zn(2+)</name>
        <dbReference type="ChEBI" id="CHEBI:29105"/>
    </cofactor>
    <text evidence="1">Binds 1 zinc ion per subunit.</text>
</comment>
<comment type="pathway">
    <text evidence="1">Purine metabolism; 7-cyano-7-deazaguanine biosynthesis.</text>
</comment>
<comment type="similarity">
    <text evidence="1">Belongs to the QueC family.</text>
</comment>
<feature type="chain" id="PRO_1000088159" description="7-cyano-7-deazaguanine synthase">
    <location>
        <begin position="1"/>
        <end position="227"/>
    </location>
</feature>
<feature type="binding site" evidence="1">
    <location>
        <begin position="7"/>
        <end position="17"/>
    </location>
    <ligand>
        <name>ATP</name>
        <dbReference type="ChEBI" id="CHEBI:30616"/>
    </ligand>
</feature>
<feature type="binding site" evidence="1">
    <location>
        <position position="187"/>
    </location>
    <ligand>
        <name>Zn(2+)</name>
        <dbReference type="ChEBI" id="CHEBI:29105"/>
    </ligand>
</feature>
<feature type="binding site" evidence="1">
    <location>
        <position position="195"/>
    </location>
    <ligand>
        <name>Zn(2+)</name>
        <dbReference type="ChEBI" id="CHEBI:29105"/>
    </ligand>
</feature>
<feature type="binding site" evidence="1">
    <location>
        <position position="198"/>
    </location>
    <ligand>
        <name>Zn(2+)</name>
        <dbReference type="ChEBI" id="CHEBI:29105"/>
    </ligand>
</feature>
<feature type="binding site" evidence="1">
    <location>
        <position position="201"/>
    </location>
    <ligand>
        <name>Zn(2+)</name>
        <dbReference type="ChEBI" id="CHEBI:29105"/>
    </ligand>
</feature>
<reference key="1">
    <citation type="submission" date="2007-03" db="EMBL/GenBank/DDBJ databases">
        <title>Complete sequence of Prosthecochloris vibrioformis DSM 265.</title>
        <authorList>
            <consortium name="US DOE Joint Genome Institute"/>
            <person name="Copeland A."/>
            <person name="Lucas S."/>
            <person name="Lapidus A."/>
            <person name="Barry K."/>
            <person name="Detter J.C."/>
            <person name="Glavina del Rio T."/>
            <person name="Hammon N."/>
            <person name="Israni S."/>
            <person name="Pitluck S."/>
            <person name="Schmutz J."/>
            <person name="Larimer F."/>
            <person name="Land M."/>
            <person name="Hauser L."/>
            <person name="Mikhailova N."/>
            <person name="Li T."/>
            <person name="Overmann J."/>
            <person name="Schuster S.C."/>
            <person name="Bryant D.A."/>
            <person name="Richardson P."/>
        </authorList>
    </citation>
    <scope>NUCLEOTIDE SEQUENCE [LARGE SCALE GENOMIC DNA]</scope>
    <source>
        <strain>DSM 265 / 1930</strain>
    </source>
</reference>
<accession>A4SDQ0</accession>
<keyword id="KW-0067">ATP-binding</keyword>
<keyword id="KW-0436">Ligase</keyword>
<keyword id="KW-0479">Metal-binding</keyword>
<keyword id="KW-0547">Nucleotide-binding</keyword>
<keyword id="KW-0671">Queuosine biosynthesis</keyword>
<keyword id="KW-0862">Zinc</keyword>
<name>QUEC_CHLPM</name>
<proteinExistence type="inferred from homology"/>
<protein>
    <recommendedName>
        <fullName evidence="1">7-cyano-7-deazaguanine synthase</fullName>
        <ecNumber evidence="1">6.3.4.20</ecNumber>
    </recommendedName>
    <alternativeName>
        <fullName evidence="1">7-cyano-7-carbaguanine synthase</fullName>
    </alternativeName>
    <alternativeName>
        <fullName evidence="1">PreQ(0) synthase</fullName>
    </alternativeName>
    <alternativeName>
        <fullName evidence="1">Queuosine biosynthesis protein QueC</fullName>
    </alternativeName>
</protein>
<gene>
    <name evidence="1" type="primary">queC</name>
    <name type="ordered locus">Cvib_0587</name>
</gene>
<sequence length="227" mass="24767">MKAVVLLSGGMDSLVTTAIAHNEGLQLAAMHVNYGQRTWQRELESFRSIAGHYGIGELLEVNADFLGTIGGSSLTDHTMAVSGADLQGTAIPTSYVPFRNACFLSMAVSWAEVIGAQKLYIGAVEEDSSGYPDCRKVFYDAFNKVIELGTKPETGIEILTPLIAMQKAGIVEKGMELDAPFHYSWSCYKSEGKACGVCDSCARRLRAFELVGVRDPIDYDVRPQYIH</sequence>
<evidence type="ECO:0000255" key="1">
    <source>
        <dbReference type="HAMAP-Rule" id="MF_01633"/>
    </source>
</evidence>